<gene>
    <name evidence="1" type="primary">dapL</name>
    <name type="ordered locus">Moth_0889</name>
</gene>
<comment type="function">
    <text evidence="2">Involved in the synthesis of meso-diaminopimelate (m-DAP or DL-DAP), required for both lysine and peptidoglycan biosynthesis. Catalyzes the direct conversion of tetrahydrodipicolinate to LL-diaminopimelate. Is also able to catalyze the reverse reaction in vitro, i.e. the transamination of LL-diaminopimelate with 2-oxoglutarate to produce tetrahydrodipicolinate and glutamate. Can also use m-DAP instead of LL-DAP as the amino-group donor, and oxaloacetate instead of 2-oxoglutarate as the amino-group acceptor.</text>
</comment>
<comment type="catalytic activity">
    <reaction evidence="1 2">
        <text>(2S,6S)-2,6-diaminopimelate + 2-oxoglutarate = (S)-2,3,4,5-tetrahydrodipicolinate + L-glutamate + H2O + H(+)</text>
        <dbReference type="Rhea" id="RHEA:23988"/>
        <dbReference type="ChEBI" id="CHEBI:15377"/>
        <dbReference type="ChEBI" id="CHEBI:15378"/>
        <dbReference type="ChEBI" id="CHEBI:16810"/>
        <dbReference type="ChEBI" id="CHEBI:16845"/>
        <dbReference type="ChEBI" id="CHEBI:29985"/>
        <dbReference type="ChEBI" id="CHEBI:57609"/>
        <dbReference type="EC" id="2.6.1.83"/>
    </reaction>
</comment>
<comment type="cofactor">
    <cofactor evidence="1">
        <name>pyridoxal 5'-phosphate</name>
        <dbReference type="ChEBI" id="CHEBI:597326"/>
    </cofactor>
</comment>
<comment type="biophysicochemical properties">
    <kinetics>
        <KM evidence="2">60.4 uM for LL-2,6-diaminopimelate</KM>
        <KM evidence="2">14 uM for L-2,3,4,5-tetrahydrodipicolinate</KM>
        <KM evidence="2">0.3 mM for 2-oxoglutarate</KM>
        <KM evidence="2">4.2 mM for glutamate</KM>
        <Vmax evidence="2">0.25 umol/min/mg enzyme for the forward reaction (tetrahydrodipicolinate synthesis)</Vmax>
        <Vmax evidence="2">0.006 umol/min/mg enzyme for the reverse reaction (LL-DAP synthesis)</Vmax>
    </kinetics>
</comment>
<comment type="pathway">
    <text evidence="1 2">Amino-acid biosynthesis; L-lysine biosynthesis via DAP pathway; LL-2,6-diaminopimelate from (S)-tetrahydrodipicolinate (aminotransferase route): step 1/1.</text>
</comment>
<comment type="subunit">
    <text evidence="1">Homodimer.</text>
</comment>
<comment type="similarity">
    <text evidence="1">Belongs to the class-I pyridoxal-phosphate-dependent aminotransferase family. LL-diaminopimelate aminotransferase subfamily.</text>
</comment>
<keyword id="KW-0032">Aminotransferase</keyword>
<keyword id="KW-0663">Pyridoxal phosphate</keyword>
<keyword id="KW-0808">Transferase</keyword>
<dbReference type="EC" id="2.6.1.83" evidence="1 2"/>
<dbReference type="EMBL" id="CP000232">
    <property type="protein sequence ID" value="ABC19206.1"/>
    <property type="molecule type" value="Genomic_DNA"/>
</dbReference>
<dbReference type="RefSeq" id="YP_429749.1">
    <property type="nucleotide sequence ID" value="NC_007644.1"/>
</dbReference>
<dbReference type="SMR" id="Q2RK33"/>
<dbReference type="STRING" id="264732.Moth_0889"/>
<dbReference type="EnsemblBacteria" id="ABC19206">
    <property type="protein sequence ID" value="ABC19206"/>
    <property type="gene ID" value="Moth_0889"/>
</dbReference>
<dbReference type="KEGG" id="mta:Moth_0889"/>
<dbReference type="PATRIC" id="fig|264732.11.peg.956"/>
<dbReference type="eggNOG" id="COG0436">
    <property type="taxonomic scope" value="Bacteria"/>
</dbReference>
<dbReference type="HOGENOM" id="CLU_017584_4_5_9"/>
<dbReference type="OrthoDB" id="9803354at2"/>
<dbReference type="BRENDA" id="2.6.1.83">
    <property type="organism ID" value="1528"/>
</dbReference>
<dbReference type="SABIO-RK" id="Q2RK33"/>
<dbReference type="UniPathway" id="UPA00034">
    <property type="reaction ID" value="UER00466"/>
</dbReference>
<dbReference type="GO" id="GO:0010285">
    <property type="term" value="F:L,L-diaminopimelate aminotransferase activity"/>
    <property type="evidence" value="ECO:0007669"/>
    <property type="project" value="UniProtKB-UniRule"/>
</dbReference>
<dbReference type="GO" id="GO:0030170">
    <property type="term" value="F:pyridoxal phosphate binding"/>
    <property type="evidence" value="ECO:0007669"/>
    <property type="project" value="UniProtKB-UniRule"/>
</dbReference>
<dbReference type="GO" id="GO:0033362">
    <property type="term" value="P:lysine biosynthetic process via diaminopimelate, diaminopimelate-aminotransferase pathway"/>
    <property type="evidence" value="ECO:0007669"/>
    <property type="project" value="UniProtKB-UniRule"/>
</dbReference>
<dbReference type="CDD" id="cd00609">
    <property type="entry name" value="AAT_like"/>
    <property type="match status" value="1"/>
</dbReference>
<dbReference type="Gene3D" id="3.90.1150.10">
    <property type="entry name" value="Aspartate Aminotransferase, domain 1"/>
    <property type="match status" value="1"/>
</dbReference>
<dbReference type="Gene3D" id="3.40.640.10">
    <property type="entry name" value="Type I PLP-dependent aspartate aminotransferase-like (Major domain)"/>
    <property type="match status" value="1"/>
</dbReference>
<dbReference type="HAMAP" id="MF_01642">
    <property type="entry name" value="DapL_aminotrans_1"/>
    <property type="match status" value="1"/>
</dbReference>
<dbReference type="InterPro" id="IPR004839">
    <property type="entry name" value="Aminotransferase_I/II_large"/>
</dbReference>
<dbReference type="InterPro" id="IPR019881">
    <property type="entry name" value="DAP-NH2Trfase_DapL_Desulfo"/>
</dbReference>
<dbReference type="InterPro" id="IPR019942">
    <property type="entry name" value="DapL/ALD1"/>
</dbReference>
<dbReference type="InterPro" id="IPR050881">
    <property type="entry name" value="LL-DAP_aminotransferase"/>
</dbReference>
<dbReference type="InterPro" id="IPR004838">
    <property type="entry name" value="NHTrfase_class1_PyrdxlP-BS"/>
</dbReference>
<dbReference type="InterPro" id="IPR015424">
    <property type="entry name" value="PyrdxlP-dep_Trfase"/>
</dbReference>
<dbReference type="InterPro" id="IPR015421">
    <property type="entry name" value="PyrdxlP-dep_Trfase_major"/>
</dbReference>
<dbReference type="InterPro" id="IPR015422">
    <property type="entry name" value="PyrdxlP-dep_Trfase_small"/>
</dbReference>
<dbReference type="NCBIfam" id="TIGR03540">
    <property type="entry name" value="DapC_direct"/>
    <property type="match status" value="1"/>
</dbReference>
<dbReference type="NCBIfam" id="NF006756">
    <property type="entry name" value="PRK09276.1"/>
    <property type="match status" value="1"/>
</dbReference>
<dbReference type="PANTHER" id="PTHR42832">
    <property type="entry name" value="AMINO ACID AMINOTRANSFERASE"/>
    <property type="match status" value="1"/>
</dbReference>
<dbReference type="PANTHER" id="PTHR42832:SF3">
    <property type="entry name" value="L-GLUTAMINE--4-(METHYLSULFANYL)-2-OXOBUTANOATE AMINOTRANSFERASE"/>
    <property type="match status" value="1"/>
</dbReference>
<dbReference type="Pfam" id="PF00155">
    <property type="entry name" value="Aminotran_1_2"/>
    <property type="match status" value="1"/>
</dbReference>
<dbReference type="SUPFAM" id="SSF53383">
    <property type="entry name" value="PLP-dependent transferases"/>
    <property type="match status" value="1"/>
</dbReference>
<dbReference type="PROSITE" id="PS00105">
    <property type="entry name" value="AA_TRANSFER_CLASS_1"/>
    <property type="match status" value="1"/>
</dbReference>
<protein>
    <recommendedName>
        <fullName evidence="1 3">LL-diaminopimelate aminotransferase</fullName>
        <shortName evidence="1 3">DAP-AT</shortName>
        <shortName evidence="1 3">DAP-aminotransferase</shortName>
        <shortName evidence="1 3">LL-DAP-aminotransferase</shortName>
        <ecNumber evidence="1 2">2.6.1.83</ecNumber>
    </recommendedName>
</protein>
<feature type="chain" id="PRO_0000342250" description="LL-diaminopimelate aminotransferase">
    <location>
        <begin position="1"/>
        <end position="390"/>
    </location>
</feature>
<feature type="binding site" evidence="1">
    <location>
        <position position="13"/>
    </location>
    <ligand>
        <name>substrate</name>
    </ligand>
</feature>
<feature type="binding site" evidence="1">
    <location>
        <position position="38"/>
    </location>
    <ligand>
        <name>substrate</name>
    </ligand>
</feature>
<feature type="binding site" evidence="1">
    <location>
        <begin position="101"/>
        <end position="102"/>
    </location>
    <ligand>
        <name>pyridoxal 5'-phosphate</name>
        <dbReference type="ChEBI" id="CHEBI:597326"/>
    </ligand>
</feature>
<feature type="binding site" evidence="1">
    <location>
        <position position="102"/>
    </location>
    <ligand>
        <name>substrate</name>
    </ligand>
</feature>
<feature type="binding site" evidence="1">
    <location>
        <position position="126"/>
    </location>
    <ligand>
        <name>pyridoxal 5'-phosphate</name>
        <dbReference type="ChEBI" id="CHEBI:597326"/>
    </ligand>
</feature>
<feature type="binding site" evidence="1">
    <location>
        <position position="126"/>
    </location>
    <ligand>
        <name>substrate</name>
    </ligand>
</feature>
<feature type="binding site" evidence="1">
    <location>
        <position position="176"/>
    </location>
    <ligand>
        <name>pyridoxal 5'-phosphate</name>
        <dbReference type="ChEBI" id="CHEBI:597326"/>
    </ligand>
</feature>
<feature type="binding site" evidence="1">
    <location>
        <position position="176"/>
    </location>
    <ligand>
        <name>substrate</name>
    </ligand>
</feature>
<feature type="binding site" evidence="1">
    <location>
        <position position="207"/>
    </location>
    <ligand>
        <name>pyridoxal 5'-phosphate</name>
        <dbReference type="ChEBI" id="CHEBI:597326"/>
    </ligand>
</feature>
<feature type="binding site" evidence="1">
    <location>
        <begin position="235"/>
        <end position="237"/>
    </location>
    <ligand>
        <name>pyridoxal 5'-phosphate</name>
        <dbReference type="ChEBI" id="CHEBI:597326"/>
    </ligand>
</feature>
<feature type="binding site" evidence="1">
    <location>
        <position position="246"/>
    </location>
    <ligand>
        <name>pyridoxal 5'-phosphate</name>
        <dbReference type="ChEBI" id="CHEBI:597326"/>
    </ligand>
</feature>
<feature type="binding site" evidence="1">
    <location>
        <position position="364"/>
    </location>
    <ligand>
        <name>substrate</name>
    </ligand>
</feature>
<feature type="modified residue" description="N6-(pyridoxal phosphate)lysine" evidence="1">
    <location>
        <position position="238"/>
    </location>
</feature>
<proteinExistence type="evidence at protein level"/>
<name>DAPAT_MOOTA</name>
<evidence type="ECO:0000255" key="1">
    <source>
        <dbReference type="HAMAP-Rule" id="MF_01642"/>
    </source>
</evidence>
<evidence type="ECO:0000269" key="2">
    <source>
    </source>
</evidence>
<evidence type="ECO:0000303" key="3">
    <source>
    </source>
</evidence>
<organism>
    <name type="scientific">Moorella thermoacetica (strain ATCC 39073 / JCM 9320)</name>
    <dbReference type="NCBI Taxonomy" id="264732"/>
    <lineage>
        <taxon>Bacteria</taxon>
        <taxon>Bacillati</taxon>
        <taxon>Bacillota</taxon>
        <taxon>Clostridia</taxon>
        <taxon>Moorellales</taxon>
        <taxon>Moorellaceae</taxon>
        <taxon>Moorella</taxon>
    </lineage>
</organism>
<reference key="1">
    <citation type="journal article" date="2008" name="Environ. Microbiol.">
        <title>The complete genome sequence of Moorella thermoacetica (f. Clostridium thermoaceticum).</title>
        <authorList>
            <person name="Pierce E."/>
            <person name="Xie G."/>
            <person name="Barabote R.D."/>
            <person name="Saunders E."/>
            <person name="Han C.S."/>
            <person name="Detter J.C."/>
            <person name="Richardson P."/>
            <person name="Brettin T.S."/>
            <person name="Das A."/>
            <person name="Ljungdahl L.G."/>
            <person name="Ragsdale S.W."/>
        </authorList>
    </citation>
    <scope>NUCLEOTIDE SEQUENCE [LARGE SCALE GENOMIC DNA]</scope>
    <source>
        <strain>ATCC 39073 / JCM 9320</strain>
    </source>
</reference>
<reference key="2">
    <citation type="journal article" date="2008" name="J. Bacteriol.">
        <title>Biochemical and phylogenetic characterization of a novel diaminopimelate biosynthesis pathway in prokaryotes identifies a diverged form of LL-diaminopimelate aminotransferase.</title>
        <authorList>
            <person name="Hudson A.O."/>
            <person name="Gilvarg C."/>
            <person name="Leustek T."/>
        </authorList>
    </citation>
    <scope>FUNCTION</scope>
    <scope>CATALYTIC ACTIVITY</scope>
    <scope>BIOPHYSICOCHEMICAL PROPERTIES</scope>
    <scope>SUBSTRATE SPECIFICITY</scope>
    <scope>PATHWAY</scope>
</reference>
<sequence length="390" mass="43318">MQEARRIRELPPYLFARIEKKIAEARERGVDIISLGIGDPDMPTPSHVIDKLVAEAHNPENHRYPTSEGLLAFRQAVADWYQRLYGVDLDPRREVVTLIGSKEGIAHISLCYVDPGDINLVPDPGYPVYNIGTLLAGGESYFMPLTAANGFLPDLGAIPSDVARRAKLMFINYPNNPTGAVADLKFFQEVVEFARSYDLIVCHDAAYSEITYDGYRAPSFLQAPGAKEVGIEFNSVSKPYNMTGWRLGWACGRADVIEALARIKSNIDSGAFQAVQYAGIAALTGPQEGLAEVRRVYQERRDIIVEGFNSLGWHLEKPKATFYVWAPVPRGYTSASFAEMVLEKAGVIITPGNGYGNYGEGYFRIALTISKERMQEAIERLRRVLGKVEF</sequence>
<accession>Q2RK33</accession>